<evidence type="ECO:0000255" key="1">
    <source>
        <dbReference type="HAMAP-Rule" id="MF_00435"/>
    </source>
</evidence>
<evidence type="ECO:0000255" key="2">
    <source>
        <dbReference type="PROSITE-ProRule" id="PRU01197"/>
    </source>
</evidence>
<evidence type="ECO:0000255" key="3">
    <source>
        <dbReference type="PROSITE-ProRule" id="PRU01198"/>
    </source>
</evidence>
<evidence type="ECO:0000269" key="4">
    <source>
    </source>
</evidence>
<evidence type="ECO:0000303" key="5">
    <source>
    </source>
</evidence>
<evidence type="ECO:0000312" key="6">
    <source>
        <dbReference type="EMBL" id="AFV12179.1"/>
    </source>
</evidence>
<reference key="1">
    <citation type="journal article" date="2012" name="BMC Genomics">
        <title>Genome-guided analysis of physiological and morphological traits of the fermentative acetate oxidizer Thermacetogenium phaeum.</title>
        <authorList>
            <person name="Oehler D."/>
            <person name="Poehlein A."/>
            <person name="Leimbach A."/>
            <person name="Muller N."/>
            <person name="Daniel R."/>
            <person name="Gottschalk G."/>
            <person name="Schink B."/>
        </authorList>
    </citation>
    <scope>NUCLEOTIDE SEQUENCE [LARGE SCALE GENOMIC DNA]</scope>
    <source>
        <strain>ATCC BAA-254 / DSM 26808 / PB</strain>
    </source>
</reference>
<reference key="2">
    <citation type="journal article" date="2014" name="Metab. Eng.">
        <title>Uncovering rare NADH-preferring ketol-acid reductoisomerases.</title>
        <authorList>
            <person name="Brinkmann-Chen S."/>
            <person name="Cahn J.K."/>
            <person name="Arnold F.H."/>
        </authorList>
    </citation>
    <scope>FUNCTION</scope>
    <scope>CATALYTIC ACTIVITY</scope>
    <scope>BIOPHYSICOCHEMICAL PROPERTIES</scope>
    <scope>SUBSTRATE SPECIFICITY</scope>
</reference>
<name>ILVC_THEPS</name>
<proteinExistence type="evidence at protein level"/>
<dbReference type="EC" id="1.1.1.382" evidence="4"/>
<dbReference type="EMBL" id="CP003732">
    <property type="protein sequence ID" value="AFV12179.1"/>
    <property type="molecule type" value="Genomic_DNA"/>
</dbReference>
<dbReference type="RefSeq" id="WP_015051055.1">
    <property type="nucleotide sequence ID" value="NC_018870.1"/>
</dbReference>
<dbReference type="SMR" id="K4LVZ1"/>
<dbReference type="STRING" id="1089553.Tph_c19850"/>
<dbReference type="KEGG" id="tpz:Tph_c19850"/>
<dbReference type="eggNOG" id="COG0059">
    <property type="taxonomic scope" value="Bacteria"/>
</dbReference>
<dbReference type="HOGENOM" id="CLU_033821_0_1_9"/>
<dbReference type="OrthoDB" id="9804088at2"/>
<dbReference type="UniPathway" id="UPA00047">
    <property type="reaction ID" value="UER00056"/>
</dbReference>
<dbReference type="UniPathway" id="UPA00049">
    <property type="reaction ID" value="UER00060"/>
</dbReference>
<dbReference type="Proteomes" id="UP000000467">
    <property type="component" value="Chromosome"/>
</dbReference>
<dbReference type="GO" id="GO:0005829">
    <property type="term" value="C:cytosol"/>
    <property type="evidence" value="ECO:0007669"/>
    <property type="project" value="TreeGrafter"/>
</dbReference>
<dbReference type="GO" id="GO:0004455">
    <property type="term" value="F:ketol-acid reductoisomerase activity"/>
    <property type="evidence" value="ECO:0007669"/>
    <property type="project" value="UniProtKB-UniRule"/>
</dbReference>
<dbReference type="GO" id="GO:0000287">
    <property type="term" value="F:magnesium ion binding"/>
    <property type="evidence" value="ECO:0007669"/>
    <property type="project" value="UniProtKB-UniRule"/>
</dbReference>
<dbReference type="GO" id="GO:0050661">
    <property type="term" value="F:NADP binding"/>
    <property type="evidence" value="ECO:0007669"/>
    <property type="project" value="InterPro"/>
</dbReference>
<dbReference type="GO" id="GO:0009097">
    <property type="term" value="P:isoleucine biosynthetic process"/>
    <property type="evidence" value="ECO:0007669"/>
    <property type="project" value="UniProtKB-UniRule"/>
</dbReference>
<dbReference type="GO" id="GO:0009099">
    <property type="term" value="P:L-valine biosynthetic process"/>
    <property type="evidence" value="ECO:0007669"/>
    <property type="project" value="UniProtKB-UniRule"/>
</dbReference>
<dbReference type="FunFam" id="3.40.50.720:FF:000023">
    <property type="entry name" value="Ketol-acid reductoisomerase (NADP(+))"/>
    <property type="match status" value="1"/>
</dbReference>
<dbReference type="Gene3D" id="6.10.240.10">
    <property type="match status" value="1"/>
</dbReference>
<dbReference type="Gene3D" id="3.40.50.720">
    <property type="entry name" value="NAD(P)-binding Rossmann-like Domain"/>
    <property type="match status" value="1"/>
</dbReference>
<dbReference type="HAMAP" id="MF_00435">
    <property type="entry name" value="IlvC"/>
    <property type="match status" value="1"/>
</dbReference>
<dbReference type="InterPro" id="IPR008927">
    <property type="entry name" value="6-PGluconate_DH-like_C_sf"/>
</dbReference>
<dbReference type="InterPro" id="IPR013023">
    <property type="entry name" value="KARI"/>
</dbReference>
<dbReference type="InterPro" id="IPR000506">
    <property type="entry name" value="KARI_C"/>
</dbReference>
<dbReference type="InterPro" id="IPR013116">
    <property type="entry name" value="KARI_N"/>
</dbReference>
<dbReference type="InterPro" id="IPR014359">
    <property type="entry name" value="KARI_prok"/>
</dbReference>
<dbReference type="InterPro" id="IPR036291">
    <property type="entry name" value="NAD(P)-bd_dom_sf"/>
</dbReference>
<dbReference type="NCBIfam" id="TIGR00465">
    <property type="entry name" value="ilvC"/>
    <property type="match status" value="1"/>
</dbReference>
<dbReference type="NCBIfam" id="NF004017">
    <property type="entry name" value="PRK05479.1"/>
    <property type="match status" value="1"/>
</dbReference>
<dbReference type="NCBIfam" id="NF009940">
    <property type="entry name" value="PRK13403.1"/>
    <property type="match status" value="1"/>
</dbReference>
<dbReference type="PANTHER" id="PTHR21371">
    <property type="entry name" value="KETOL-ACID REDUCTOISOMERASE, MITOCHONDRIAL"/>
    <property type="match status" value="1"/>
</dbReference>
<dbReference type="PANTHER" id="PTHR21371:SF1">
    <property type="entry name" value="KETOL-ACID REDUCTOISOMERASE, MITOCHONDRIAL"/>
    <property type="match status" value="1"/>
</dbReference>
<dbReference type="Pfam" id="PF01450">
    <property type="entry name" value="KARI_C"/>
    <property type="match status" value="1"/>
</dbReference>
<dbReference type="Pfam" id="PF07991">
    <property type="entry name" value="KARI_N"/>
    <property type="match status" value="1"/>
</dbReference>
<dbReference type="PIRSF" id="PIRSF000116">
    <property type="entry name" value="IlvC_gammaproteo"/>
    <property type="match status" value="1"/>
</dbReference>
<dbReference type="SUPFAM" id="SSF48179">
    <property type="entry name" value="6-phosphogluconate dehydrogenase C-terminal domain-like"/>
    <property type="match status" value="1"/>
</dbReference>
<dbReference type="SUPFAM" id="SSF51735">
    <property type="entry name" value="NAD(P)-binding Rossmann-fold domains"/>
    <property type="match status" value="1"/>
</dbReference>
<dbReference type="PROSITE" id="PS51851">
    <property type="entry name" value="KARI_C"/>
    <property type="match status" value="1"/>
</dbReference>
<dbReference type="PROSITE" id="PS51850">
    <property type="entry name" value="KARI_N"/>
    <property type="match status" value="1"/>
</dbReference>
<feature type="chain" id="PRO_0000436835" description="Ketol-acid reductoisomerase (NAD(+))">
    <location>
        <begin position="1"/>
        <end position="332"/>
    </location>
</feature>
<feature type="domain" description="KARI N-terminal Rossmann" evidence="2">
    <location>
        <begin position="1"/>
        <end position="181"/>
    </location>
</feature>
<feature type="domain" description="KARI C-terminal knotted" evidence="3">
    <location>
        <begin position="182"/>
        <end position="327"/>
    </location>
</feature>
<feature type="active site" evidence="1">
    <location>
        <position position="107"/>
    </location>
</feature>
<feature type="binding site" evidence="1">
    <location>
        <begin position="24"/>
        <end position="27"/>
    </location>
    <ligand>
        <name>NAD(+)</name>
        <dbReference type="ChEBI" id="CHEBI:57540"/>
    </ligand>
</feature>
<feature type="binding site" evidence="1">
    <location>
        <position position="50"/>
    </location>
    <ligand>
        <name>NAD(+)</name>
        <dbReference type="ChEBI" id="CHEBI:57540"/>
    </ligand>
</feature>
<feature type="binding site" evidence="1">
    <location>
        <begin position="82"/>
        <end position="85"/>
    </location>
    <ligand>
        <name>NAD(+)</name>
        <dbReference type="ChEBI" id="CHEBI:57540"/>
    </ligand>
</feature>
<feature type="binding site" evidence="1">
    <location>
        <position position="133"/>
    </location>
    <ligand>
        <name>NAD(+)</name>
        <dbReference type="ChEBI" id="CHEBI:57540"/>
    </ligand>
</feature>
<feature type="binding site" evidence="1">
    <location>
        <position position="190"/>
    </location>
    <ligand>
        <name>Mg(2+)</name>
        <dbReference type="ChEBI" id="CHEBI:18420"/>
        <label>1</label>
    </ligand>
</feature>
<feature type="binding site" evidence="1">
    <location>
        <position position="190"/>
    </location>
    <ligand>
        <name>Mg(2+)</name>
        <dbReference type="ChEBI" id="CHEBI:18420"/>
        <label>2</label>
    </ligand>
</feature>
<feature type="binding site" evidence="1">
    <location>
        <position position="194"/>
    </location>
    <ligand>
        <name>Mg(2+)</name>
        <dbReference type="ChEBI" id="CHEBI:18420"/>
        <label>1</label>
    </ligand>
</feature>
<feature type="binding site" evidence="1">
    <location>
        <position position="226"/>
    </location>
    <ligand>
        <name>Mg(2+)</name>
        <dbReference type="ChEBI" id="CHEBI:18420"/>
        <label>2</label>
    </ligand>
</feature>
<feature type="binding site" evidence="1">
    <location>
        <position position="230"/>
    </location>
    <ligand>
        <name>Mg(2+)</name>
        <dbReference type="ChEBI" id="CHEBI:18420"/>
        <label>2</label>
    </ligand>
</feature>
<feature type="binding site" evidence="1">
    <location>
        <position position="251"/>
    </location>
    <ligand>
        <name>substrate</name>
    </ligand>
</feature>
<organism>
    <name type="scientific">Thermacetogenium phaeum (strain ATCC BAA-254 / DSM 26808 / PB)</name>
    <dbReference type="NCBI Taxonomy" id="1089553"/>
    <lineage>
        <taxon>Bacteria</taxon>
        <taxon>Bacillati</taxon>
        <taxon>Bacillota</taxon>
        <taxon>Clostridia</taxon>
        <taxon>Thermoanaerobacterales</taxon>
        <taxon>Thermoanaerobacteraceae</taxon>
        <taxon>Thermacetogenium</taxon>
    </lineage>
</organism>
<accession>K4LVZ1</accession>
<keyword id="KW-0028">Amino-acid biosynthesis</keyword>
<keyword id="KW-0100">Branched-chain amino acid biosynthesis</keyword>
<keyword id="KW-0460">Magnesium</keyword>
<keyword id="KW-0479">Metal-binding</keyword>
<keyword id="KW-0520">NAD</keyword>
<keyword id="KW-0560">Oxidoreductase</keyword>
<keyword id="KW-1185">Reference proteome</keyword>
<comment type="function">
    <text evidence="4">Involved in the biosynthesis of branched-chain amino acids (BCAA). Catalyzes an alkyl-migration followed by a ketol-acid reduction of (S)-2-acetolactate (S2AL) to yield (R)-2,3-dihydroxy-isovalerate. In the isomerase reaction, S2AL is rearranged via a Mg-dependent methyl migration to produce 3-hydroxy-3-methyl-2-ketobutyrate (HMKB). In the reductase reaction, this 2-ketoacid undergoes a metal-dependent reduction by NADH to yield (R)-2,3-dihydroxy-isovalerate.</text>
</comment>
<comment type="catalytic activity">
    <reaction evidence="4">
        <text>(2R)-2,3-dihydroxy-3-methylbutanoate + NAD(+) = (2S)-2-acetolactate + NADH + H(+)</text>
        <dbReference type="Rhea" id="RHEA:30627"/>
        <dbReference type="ChEBI" id="CHEBI:15378"/>
        <dbReference type="ChEBI" id="CHEBI:49072"/>
        <dbReference type="ChEBI" id="CHEBI:57540"/>
        <dbReference type="ChEBI" id="CHEBI:57945"/>
        <dbReference type="ChEBI" id="CHEBI:58476"/>
        <dbReference type="EC" id="1.1.1.382"/>
    </reaction>
</comment>
<comment type="cofactor">
    <cofactor evidence="1">
        <name>Mg(2+)</name>
        <dbReference type="ChEBI" id="CHEBI:18420"/>
    </cofactor>
    <text evidence="1">Binds 2 magnesium ions per subunit.</text>
</comment>
<comment type="biophysicochemical properties">
    <kinetics>
        <KM evidence="4">1 uM for NADH (at pH 7 with S2AL as substrate)</KM>
        <KM evidence="4">40 uM for NADPH (at pH 7 with S2AL as substrate)</KM>
        <text evidence="4">kcat is 0.46 sec(-1) for reductoisomerase activity with NADH (at pH 7 with S2AL as substrate). kcat is 0.25 sec(-1) for reductoisomerase activity with NADPH (at pH 7 with S2AL as substrate).</text>
    </kinetics>
</comment>
<comment type="pathway">
    <text evidence="1">Amino-acid biosynthesis; L-isoleucine biosynthesis; L-isoleucine from 2-oxobutanoate: step 2/4.</text>
</comment>
<comment type="pathway">
    <text evidence="1">Amino-acid biosynthesis; L-valine biosynthesis; L-valine from pyruvate: step 2/4.</text>
</comment>
<comment type="similarity">
    <text evidence="1">Belongs to the ketol-acid reductoisomerase family.</text>
</comment>
<gene>
    <name evidence="1" type="primary">ilvC</name>
    <name evidence="6" type="ordered locus">Tph_c19850</name>
</gene>
<sequence>MKIYYDQDADLQYLDGKTVAVIGYGSQGHAQSQNLRDSGVKVVVADIPSSENWKKAEEAQFQPLTADEAAREADIIQILVPDEKQAALYRESIAPNLRPGKALVFSHGFNIHFKQIVPPPDVDVFMVAPKGPGHLVRRMYEEGAGVPSLVAVEQDYSGQALNLALAYAKGIGATRAGVIQTTFKEETETDLFGEQAVLCGGITELIRAGFDTLVDAGYQPEIAYFECLHEMKLIVDLIYEGGISTMRYSISDTAEYGDLTRGKRIITEATREEMKKILKEIQDGVFAREWLLENQVGRPVYNALRRKEQNHLIETVGARLRGMMPWLKKKVI</sequence>
<protein>
    <recommendedName>
        <fullName evidence="5">Ketol-acid reductoisomerase (NAD(+))</fullName>
        <shortName evidence="1 5">KARI</shortName>
        <ecNumber evidence="4">1.1.1.382</ecNumber>
    </recommendedName>
    <alternativeName>
        <fullName evidence="1">Acetohydroxy-acid isomeroreductase</fullName>
        <shortName evidence="1">AHIR</shortName>
    </alternativeName>
    <alternativeName>
        <fullName evidence="1">Alpha-keto-beta-hydroxylacyl reductoisomerase</fullName>
    </alternativeName>
    <alternativeName>
        <fullName evidence="1 5">Ketol-acid reductoisomerase type 1</fullName>
    </alternativeName>
    <alternativeName>
        <fullName evidence="1 5">Ketol-acid reductoisomerase type I</fullName>
    </alternativeName>
</protein>